<accession>Q48SQ1</accession>
<dbReference type="EMBL" id="CP000056">
    <property type="protein sequence ID" value="AAX72259.1"/>
    <property type="molecule type" value="Genomic_DNA"/>
</dbReference>
<dbReference type="RefSeq" id="WP_011284943.1">
    <property type="nucleotide sequence ID" value="NC_007296.2"/>
</dbReference>
<dbReference type="SMR" id="Q48SQ1"/>
<dbReference type="KEGG" id="spb:M28_Spy1149"/>
<dbReference type="HOGENOM" id="CLU_002794_2_1_9"/>
<dbReference type="GO" id="GO:0005829">
    <property type="term" value="C:cytosol"/>
    <property type="evidence" value="ECO:0007669"/>
    <property type="project" value="TreeGrafter"/>
</dbReference>
<dbReference type="GO" id="GO:0005525">
    <property type="term" value="F:GTP binding"/>
    <property type="evidence" value="ECO:0007669"/>
    <property type="project" value="UniProtKB-UniRule"/>
</dbReference>
<dbReference type="GO" id="GO:0003924">
    <property type="term" value="F:GTPase activity"/>
    <property type="evidence" value="ECO:0007669"/>
    <property type="project" value="InterPro"/>
</dbReference>
<dbReference type="GO" id="GO:0016150">
    <property type="term" value="F:translation release factor activity, codon nonspecific"/>
    <property type="evidence" value="ECO:0007669"/>
    <property type="project" value="TreeGrafter"/>
</dbReference>
<dbReference type="GO" id="GO:0016149">
    <property type="term" value="F:translation release factor activity, codon specific"/>
    <property type="evidence" value="ECO:0007669"/>
    <property type="project" value="UniProtKB-UniRule"/>
</dbReference>
<dbReference type="GO" id="GO:0006449">
    <property type="term" value="P:regulation of translational termination"/>
    <property type="evidence" value="ECO:0007669"/>
    <property type="project" value="UniProtKB-UniRule"/>
</dbReference>
<dbReference type="CDD" id="cd04169">
    <property type="entry name" value="RF3"/>
    <property type="match status" value="1"/>
</dbReference>
<dbReference type="CDD" id="cd16259">
    <property type="entry name" value="RF3_III"/>
    <property type="match status" value="1"/>
</dbReference>
<dbReference type="FunFam" id="2.40.30.10:FF:000040">
    <property type="entry name" value="Peptide chain release factor 3"/>
    <property type="match status" value="1"/>
</dbReference>
<dbReference type="FunFam" id="3.30.70.3280:FF:000001">
    <property type="entry name" value="Peptide chain release factor 3"/>
    <property type="match status" value="1"/>
</dbReference>
<dbReference type="FunFam" id="3.40.50.300:FF:000542">
    <property type="entry name" value="Peptide chain release factor 3"/>
    <property type="match status" value="1"/>
</dbReference>
<dbReference type="Gene3D" id="3.40.50.300">
    <property type="entry name" value="P-loop containing nucleotide triphosphate hydrolases"/>
    <property type="match status" value="1"/>
</dbReference>
<dbReference type="Gene3D" id="3.30.70.3280">
    <property type="entry name" value="Peptide chain release factor 3, domain III"/>
    <property type="match status" value="1"/>
</dbReference>
<dbReference type="Gene3D" id="2.40.30.10">
    <property type="entry name" value="Translation factors"/>
    <property type="match status" value="1"/>
</dbReference>
<dbReference type="HAMAP" id="MF_00072">
    <property type="entry name" value="Rel_fac_3"/>
    <property type="match status" value="1"/>
</dbReference>
<dbReference type="InterPro" id="IPR053905">
    <property type="entry name" value="EF-G-like_DII"/>
</dbReference>
<dbReference type="InterPro" id="IPR035647">
    <property type="entry name" value="EFG_III/V"/>
</dbReference>
<dbReference type="InterPro" id="IPR031157">
    <property type="entry name" value="G_TR_CS"/>
</dbReference>
<dbReference type="InterPro" id="IPR027417">
    <property type="entry name" value="P-loop_NTPase"/>
</dbReference>
<dbReference type="InterPro" id="IPR004548">
    <property type="entry name" value="PrfC"/>
</dbReference>
<dbReference type="InterPro" id="IPR032090">
    <property type="entry name" value="RF3_C"/>
</dbReference>
<dbReference type="InterPro" id="IPR038467">
    <property type="entry name" value="RF3_dom_3_sf"/>
</dbReference>
<dbReference type="InterPro" id="IPR041732">
    <property type="entry name" value="RF3_GTP-bd"/>
</dbReference>
<dbReference type="InterPro" id="IPR005225">
    <property type="entry name" value="Small_GTP-bd"/>
</dbReference>
<dbReference type="InterPro" id="IPR000795">
    <property type="entry name" value="T_Tr_GTP-bd_dom"/>
</dbReference>
<dbReference type="InterPro" id="IPR009000">
    <property type="entry name" value="Transl_B-barrel_sf"/>
</dbReference>
<dbReference type="NCBIfam" id="TIGR00503">
    <property type="entry name" value="prfC"/>
    <property type="match status" value="1"/>
</dbReference>
<dbReference type="NCBIfam" id="NF001964">
    <property type="entry name" value="PRK00741.1"/>
    <property type="match status" value="1"/>
</dbReference>
<dbReference type="NCBIfam" id="TIGR00231">
    <property type="entry name" value="small_GTP"/>
    <property type="match status" value="1"/>
</dbReference>
<dbReference type="PANTHER" id="PTHR43556">
    <property type="entry name" value="PEPTIDE CHAIN RELEASE FACTOR RF3"/>
    <property type="match status" value="1"/>
</dbReference>
<dbReference type="PANTHER" id="PTHR43556:SF2">
    <property type="entry name" value="PEPTIDE CHAIN RELEASE FACTOR RF3"/>
    <property type="match status" value="1"/>
</dbReference>
<dbReference type="Pfam" id="PF22042">
    <property type="entry name" value="EF-G_D2"/>
    <property type="match status" value="1"/>
</dbReference>
<dbReference type="Pfam" id="PF00009">
    <property type="entry name" value="GTP_EFTU"/>
    <property type="match status" value="1"/>
</dbReference>
<dbReference type="Pfam" id="PF16658">
    <property type="entry name" value="RF3_C"/>
    <property type="match status" value="1"/>
</dbReference>
<dbReference type="PRINTS" id="PR00315">
    <property type="entry name" value="ELONGATNFCT"/>
</dbReference>
<dbReference type="PRINTS" id="PR01037">
    <property type="entry name" value="TCRTETOQM"/>
</dbReference>
<dbReference type="SUPFAM" id="SSF54980">
    <property type="entry name" value="EF-G C-terminal domain-like"/>
    <property type="match status" value="1"/>
</dbReference>
<dbReference type="SUPFAM" id="SSF52540">
    <property type="entry name" value="P-loop containing nucleoside triphosphate hydrolases"/>
    <property type="match status" value="1"/>
</dbReference>
<dbReference type="SUPFAM" id="SSF50447">
    <property type="entry name" value="Translation proteins"/>
    <property type="match status" value="1"/>
</dbReference>
<dbReference type="PROSITE" id="PS00301">
    <property type="entry name" value="G_TR_1"/>
    <property type="match status" value="1"/>
</dbReference>
<dbReference type="PROSITE" id="PS51722">
    <property type="entry name" value="G_TR_2"/>
    <property type="match status" value="1"/>
</dbReference>
<organism>
    <name type="scientific">Streptococcus pyogenes serotype M28 (strain MGAS6180)</name>
    <dbReference type="NCBI Taxonomy" id="319701"/>
    <lineage>
        <taxon>Bacteria</taxon>
        <taxon>Bacillati</taxon>
        <taxon>Bacillota</taxon>
        <taxon>Bacilli</taxon>
        <taxon>Lactobacillales</taxon>
        <taxon>Streptococcaceae</taxon>
        <taxon>Streptococcus</taxon>
    </lineage>
</organism>
<evidence type="ECO:0000255" key="1">
    <source>
        <dbReference type="HAMAP-Rule" id="MF_00072"/>
    </source>
</evidence>
<protein>
    <recommendedName>
        <fullName evidence="1">Peptide chain release factor 3</fullName>
        <shortName evidence="1">RF-3</shortName>
    </recommendedName>
</protein>
<name>RF3_STRPM</name>
<reference key="1">
    <citation type="journal article" date="2005" name="J. Infect. Dis.">
        <title>Genome sequence of a serotype M28 strain of group A Streptococcus: potential new insights into puerperal sepsis and bacterial disease specificity.</title>
        <authorList>
            <person name="Green N.M."/>
            <person name="Zhang S."/>
            <person name="Porcella S.F."/>
            <person name="Nagiec M.J."/>
            <person name="Barbian K.D."/>
            <person name="Beres S.B."/>
            <person name="Lefebvre R.B."/>
            <person name="Musser J.M."/>
        </authorList>
    </citation>
    <scope>NUCLEOTIDE SEQUENCE [LARGE SCALE GENOMIC DNA]</scope>
    <source>
        <strain>MGAS6180</strain>
    </source>
</reference>
<sequence>MSLTEEIKKRRTFAIISHPDAGKTTITEQLLYFGGEIREAGTVKGKKSGTFAKSDWMDIEKQRGISVTSSVMQFDYAGKRVNILDTPGHEDFSEDTYRTLMAVDAAVMVVDSAKGIEAQTKKLFEVVKHRNIPVFTFINKLDRDGREPLELLEELEEVLGIASYPMNWPIGMGRAFEGLYDLHNKRLELYKGDERFASIEDGDQLFANNPFYEQVKEDIELLQEAGNVFSEQAILDGDLTPVFFGSALTNFGVQTFLDTFLEFAPEPHGHKTTEGNVVDPLAKDFSGFVFKIQANMDPKHRDRIAFVRIVSGEFERGMGVNLTRTGKGAKLSNVTQFMAESRENVTNAVAGDIIGVYDTGTYQVGDTLTVGKNKFEFEPLPTFTPEIFMKVSPKNVMKQKSFHKGIEQLVQEGAIQLYKNYQTGEYMLGAVGQLQFEVFKHRMEGEYNAEVVMTPMGKKTVRWISEDDLDQRMSSSRNILAKDRFDQPVFLFENDFALRWFADKYPDVTLEEKM</sequence>
<feature type="chain" id="PRO_0000242216" description="Peptide chain release factor 3">
    <location>
        <begin position="1"/>
        <end position="514"/>
    </location>
</feature>
<feature type="domain" description="tr-type G">
    <location>
        <begin position="8"/>
        <end position="268"/>
    </location>
</feature>
<feature type="binding site" evidence="1">
    <location>
        <begin position="17"/>
        <end position="24"/>
    </location>
    <ligand>
        <name>GTP</name>
        <dbReference type="ChEBI" id="CHEBI:37565"/>
    </ligand>
</feature>
<feature type="binding site" evidence="1">
    <location>
        <begin position="85"/>
        <end position="89"/>
    </location>
    <ligand>
        <name>GTP</name>
        <dbReference type="ChEBI" id="CHEBI:37565"/>
    </ligand>
</feature>
<feature type="binding site" evidence="1">
    <location>
        <begin position="139"/>
        <end position="142"/>
    </location>
    <ligand>
        <name>GTP</name>
        <dbReference type="ChEBI" id="CHEBI:37565"/>
    </ligand>
</feature>
<gene>
    <name evidence="1" type="primary">prfC</name>
    <name type="ordered locus">M28_Spy1149</name>
</gene>
<proteinExistence type="inferred from homology"/>
<comment type="function">
    <text evidence="1">Increases the formation of ribosomal termination complexes and stimulates activities of RF-1 and RF-2. It binds guanine nucleotides and has strong preference for UGA stop codons. It may interact directly with the ribosome. The stimulation of RF-1 and RF-2 is significantly reduced by GTP and GDP, but not by GMP.</text>
</comment>
<comment type="subcellular location">
    <subcellularLocation>
        <location evidence="1">Cytoplasm</location>
    </subcellularLocation>
</comment>
<comment type="similarity">
    <text evidence="1">Belongs to the TRAFAC class translation factor GTPase superfamily. Classic translation factor GTPase family. PrfC subfamily.</text>
</comment>
<keyword id="KW-0963">Cytoplasm</keyword>
<keyword id="KW-0342">GTP-binding</keyword>
<keyword id="KW-0547">Nucleotide-binding</keyword>
<keyword id="KW-0648">Protein biosynthesis</keyword>